<accession>P0C400</accession>
<accession>P12088</accession>
<accession>P69522</accession>
<accession>Q6QY00</accession>
<accession>Q6QY64</accession>
<protein>
    <recommendedName>
        <fullName evidence="1">Cytochrome b559 subunit beta</fullName>
    </recommendedName>
    <alternativeName>
        <fullName evidence="1">PSII reaction center subunit VI</fullName>
    </alternativeName>
</protein>
<comment type="function">
    <text evidence="1">This b-type cytochrome is tightly associated with the reaction center of photosystem II (PSII). PSII is a light-driven water:plastoquinone oxidoreductase that uses light energy to abstract electrons from H(2)O, generating O(2) and a proton gradient subsequently used for ATP formation. It consists of a core antenna complex that captures photons, and an electron transfer chain that converts photonic excitation into a charge separation.</text>
</comment>
<comment type="cofactor">
    <cofactor evidence="1">
        <name>heme b</name>
        <dbReference type="ChEBI" id="CHEBI:60344"/>
    </cofactor>
    <text evidence="1">With its partner (PsbE) binds heme. PSII binds additional chlorophylls, carotenoids and specific lipids.</text>
</comment>
<comment type="subunit">
    <text evidence="1">Heterodimer of an alpha subunit and a beta subunit. PSII is composed of 1 copy each of membrane proteins PsbA, PsbB, PsbC, PsbD, PsbE, PsbF, PsbH, PsbI, PsbJ, PsbK, PsbL, PsbM, PsbT, PsbX, PsbY, PsbZ, Psb30/Ycf12, at least 3 peripheral proteins of the oxygen-evolving complex and a large number of cofactors. It forms dimeric complexes.</text>
</comment>
<comment type="subcellular location">
    <subcellularLocation>
        <location evidence="1">Plastid</location>
        <location evidence="1">Chloroplast thylakoid membrane</location>
        <topology evidence="1">Single-pass membrane protein</topology>
    </subcellularLocation>
</comment>
<comment type="similarity">
    <text evidence="1">Belongs to the PsbE/PsbF family.</text>
</comment>
<comment type="sequence caution" evidence="2">
    <conflict type="erroneous initiation">
        <sequence resource="EMBL-CDS" id="AAS46065"/>
    </conflict>
    <text>Extended N-terminus.</text>
</comment>
<name>PSBF_ORYSI</name>
<dbReference type="EMBL" id="AY522329">
    <property type="protein sequence ID" value="AAS46065.1"/>
    <property type="status" value="ALT_INIT"/>
    <property type="molecule type" value="Genomic_DNA"/>
</dbReference>
<dbReference type="RefSeq" id="YP_009161380.1">
    <property type="nucleotide sequence ID" value="NC_027678.1"/>
</dbReference>
<dbReference type="RefSeq" id="YP_654225.2">
    <property type="nucleotide sequence ID" value="NC_008155.1"/>
</dbReference>
<dbReference type="SMR" id="P0C400"/>
<dbReference type="STRING" id="39946.P0C400"/>
<dbReference type="GeneID" id="4126889"/>
<dbReference type="Proteomes" id="UP000007015">
    <property type="component" value="Chloroplast"/>
</dbReference>
<dbReference type="GO" id="GO:0009535">
    <property type="term" value="C:chloroplast thylakoid membrane"/>
    <property type="evidence" value="ECO:0007669"/>
    <property type="project" value="UniProtKB-SubCell"/>
</dbReference>
<dbReference type="GO" id="GO:0009539">
    <property type="term" value="C:photosystem II reaction center"/>
    <property type="evidence" value="ECO:0007669"/>
    <property type="project" value="InterPro"/>
</dbReference>
<dbReference type="GO" id="GO:0009536">
    <property type="term" value="C:plastid"/>
    <property type="evidence" value="ECO:0000305"/>
    <property type="project" value="Gramene"/>
</dbReference>
<dbReference type="GO" id="GO:0009055">
    <property type="term" value="F:electron transfer activity"/>
    <property type="evidence" value="ECO:0007669"/>
    <property type="project" value="UniProtKB-UniRule"/>
</dbReference>
<dbReference type="GO" id="GO:0020037">
    <property type="term" value="F:heme binding"/>
    <property type="evidence" value="ECO:0007669"/>
    <property type="project" value="InterPro"/>
</dbReference>
<dbReference type="GO" id="GO:0005506">
    <property type="term" value="F:iron ion binding"/>
    <property type="evidence" value="ECO:0007669"/>
    <property type="project" value="UniProtKB-UniRule"/>
</dbReference>
<dbReference type="GO" id="GO:0009767">
    <property type="term" value="P:photosynthetic electron transport chain"/>
    <property type="evidence" value="ECO:0007669"/>
    <property type="project" value="InterPro"/>
</dbReference>
<dbReference type="HAMAP" id="MF_00643">
    <property type="entry name" value="PSII_PsbF"/>
    <property type="match status" value="1"/>
</dbReference>
<dbReference type="InterPro" id="IPR006241">
    <property type="entry name" value="PSII_cyt_b559_bsu"/>
</dbReference>
<dbReference type="InterPro" id="IPR006216">
    <property type="entry name" value="PSII_cyt_b559_CS"/>
</dbReference>
<dbReference type="InterPro" id="IPR013081">
    <property type="entry name" value="PSII_cyt_b559_N"/>
</dbReference>
<dbReference type="NCBIfam" id="TIGR01333">
    <property type="entry name" value="cyt_b559_beta"/>
    <property type="match status" value="1"/>
</dbReference>
<dbReference type="Pfam" id="PF00283">
    <property type="entry name" value="Cytochrom_B559"/>
    <property type="match status" value="1"/>
</dbReference>
<dbReference type="PIRSF" id="PIRSF000037">
    <property type="entry name" value="PsbF"/>
    <property type="match status" value="1"/>
</dbReference>
<dbReference type="SUPFAM" id="SSF161045">
    <property type="entry name" value="Cytochrome b559 subunits"/>
    <property type="match status" value="1"/>
</dbReference>
<dbReference type="PROSITE" id="PS00537">
    <property type="entry name" value="CYTOCHROME_B559"/>
    <property type="match status" value="1"/>
</dbReference>
<feature type="chain" id="PRO_0000289556" description="Cytochrome b559 subunit beta">
    <location>
        <begin position="1"/>
        <end position="39"/>
    </location>
</feature>
<feature type="transmembrane region" description="Helical" evidence="1">
    <location>
        <begin position="14"/>
        <end position="30"/>
    </location>
</feature>
<feature type="binding site" description="axial binding residue" evidence="1">
    <location>
        <position position="18"/>
    </location>
    <ligand>
        <name>heme</name>
        <dbReference type="ChEBI" id="CHEBI:30413"/>
        <note>ligand shared with alpha subunit</note>
    </ligand>
    <ligandPart>
        <name>Fe</name>
        <dbReference type="ChEBI" id="CHEBI:18248"/>
    </ligandPart>
</feature>
<gene>
    <name evidence="1" type="primary">psbF</name>
    <name type="ORF">9311076</name>
</gene>
<keyword id="KW-0150">Chloroplast</keyword>
<keyword id="KW-0249">Electron transport</keyword>
<keyword id="KW-0349">Heme</keyword>
<keyword id="KW-0408">Iron</keyword>
<keyword id="KW-0472">Membrane</keyword>
<keyword id="KW-0479">Metal-binding</keyword>
<keyword id="KW-0602">Photosynthesis</keyword>
<keyword id="KW-0604">Photosystem II</keyword>
<keyword id="KW-0934">Plastid</keyword>
<keyword id="KW-1185">Reference proteome</keyword>
<keyword id="KW-0793">Thylakoid</keyword>
<keyword id="KW-0812">Transmembrane</keyword>
<keyword id="KW-1133">Transmembrane helix</keyword>
<keyword id="KW-0813">Transport</keyword>
<reference key="1">
    <citation type="journal article" date="2004" name="Plant Physiol.">
        <title>A comparison of rice chloroplast genomes.</title>
        <authorList>
            <person name="Tang J."/>
            <person name="Xia H."/>
            <person name="Cao M."/>
            <person name="Zhang X."/>
            <person name="Zeng W."/>
            <person name="Hu S."/>
            <person name="Tong W."/>
            <person name="Wang J."/>
            <person name="Wang J."/>
            <person name="Yu J."/>
            <person name="Yang H."/>
            <person name="Zhu L."/>
        </authorList>
    </citation>
    <scope>NUCLEOTIDE SEQUENCE [LARGE SCALE GENOMIC DNA]</scope>
    <source>
        <strain>cv. 93-11</strain>
    </source>
</reference>
<proteinExistence type="inferred from homology"/>
<sequence length="39" mass="4484">MTIDRTYPIFTVRWLAVHGLAVPTVFFLGSISAMQFIQR</sequence>
<evidence type="ECO:0000255" key="1">
    <source>
        <dbReference type="HAMAP-Rule" id="MF_00643"/>
    </source>
</evidence>
<evidence type="ECO:0000305" key="2"/>
<geneLocation type="chloroplast"/>
<organism>
    <name type="scientific">Oryza sativa subsp. indica</name>
    <name type="common">Rice</name>
    <dbReference type="NCBI Taxonomy" id="39946"/>
    <lineage>
        <taxon>Eukaryota</taxon>
        <taxon>Viridiplantae</taxon>
        <taxon>Streptophyta</taxon>
        <taxon>Embryophyta</taxon>
        <taxon>Tracheophyta</taxon>
        <taxon>Spermatophyta</taxon>
        <taxon>Magnoliopsida</taxon>
        <taxon>Liliopsida</taxon>
        <taxon>Poales</taxon>
        <taxon>Poaceae</taxon>
        <taxon>BOP clade</taxon>
        <taxon>Oryzoideae</taxon>
        <taxon>Oryzeae</taxon>
        <taxon>Oryzinae</taxon>
        <taxon>Oryza</taxon>
        <taxon>Oryza sativa</taxon>
    </lineage>
</organism>